<gene>
    <name evidence="1" type="primary">rpmE2</name>
    <name type="ordered locus">HEAR0703</name>
</gene>
<comment type="subunit">
    <text evidence="1">Part of the 50S ribosomal subunit.</text>
</comment>
<comment type="similarity">
    <text evidence="1">Belongs to the bacterial ribosomal protein bL31 family. Type B subfamily.</text>
</comment>
<protein>
    <recommendedName>
        <fullName evidence="1">Large ribosomal subunit protein bL31B</fullName>
    </recommendedName>
    <alternativeName>
        <fullName evidence="2">50S ribosomal protein L31 type B</fullName>
    </alternativeName>
</protein>
<organism>
    <name type="scientific">Herminiimonas arsenicoxydans</name>
    <dbReference type="NCBI Taxonomy" id="204773"/>
    <lineage>
        <taxon>Bacteria</taxon>
        <taxon>Pseudomonadati</taxon>
        <taxon>Pseudomonadota</taxon>
        <taxon>Betaproteobacteria</taxon>
        <taxon>Burkholderiales</taxon>
        <taxon>Oxalobacteraceae</taxon>
        <taxon>Herminiimonas</taxon>
    </lineage>
</organism>
<sequence>MKAGIHPEYREVLFHDVSNDFKFITRSTINTREKIEFEGTEYPLVKIEVSSESHPFYTGKHKIVDTAGRVDKFRKKFGTVGSKTQMAE</sequence>
<accession>A4G310</accession>
<dbReference type="EMBL" id="CU207211">
    <property type="protein sequence ID" value="CAL60897.1"/>
    <property type="molecule type" value="Genomic_DNA"/>
</dbReference>
<dbReference type="SMR" id="A4G310"/>
<dbReference type="STRING" id="204773.HEAR0703"/>
<dbReference type="KEGG" id="har:HEAR0703"/>
<dbReference type="eggNOG" id="COG0254">
    <property type="taxonomic scope" value="Bacteria"/>
</dbReference>
<dbReference type="HOGENOM" id="CLU_114306_2_1_4"/>
<dbReference type="OrthoDB" id="9803251at2"/>
<dbReference type="Proteomes" id="UP000006697">
    <property type="component" value="Chromosome"/>
</dbReference>
<dbReference type="GO" id="GO:1990904">
    <property type="term" value="C:ribonucleoprotein complex"/>
    <property type="evidence" value="ECO:0007669"/>
    <property type="project" value="UniProtKB-KW"/>
</dbReference>
<dbReference type="GO" id="GO:0005840">
    <property type="term" value="C:ribosome"/>
    <property type="evidence" value="ECO:0007669"/>
    <property type="project" value="UniProtKB-KW"/>
</dbReference>
<dbReference type="GO" id="GO:0003735">
    <property type="term" value="F:structural constituent of ribosome"/>
    <property type="evidence" value="ECO:0007669"/>
    <property type="project" value="InterPro"/>
</dbReference>
<dbReference type="GO" id="GO:0006412">
    <property type="term" value="P:translation"/>
    <property type="evidence" value="ECO:0007669"/>
    <property type="project" value="UniProtKB-UniRule"/>
</dbReference>
<dbReference type="Gene3D" id="4.10.830.30">
    <property type="entry name" value="Ribosomal protein L31"/>
    <property type="match status" value="1"/>
</dbReference>
<dbReference type="HAMAP" id="MF_00502">
    <property type="entry name" value="Ribosomal_bL31_2"/>
    <property type="match status" value="1"/>
</dbReference>
<dbReference type="InterPro" id="IPR034704">
    <property type="entry name" value="Ribosomal_bL28/bL31-like_sf"/>
</dbReference>
<dbReference type="InterPro" id="IPR002150">
    <property type="entry name" value="Ribosomal_bL31"/>
</dbReference>
<dbReference type="InterPro" id="IPR027493">
    <property type="entry name" value="Ribosomal_bL31_B"/>
</dbReference>
<dbReference type="InterPro" id="IPR042105">
    <property type="entry name" value="Ribosomal_bL31_sf"/>
</dbReference>
<dbReference type="NCBIfam" id="TIGR00105">
    <property type="entry name" value="L31"/>
    <property type="match status" value="1"/>
</dbReference>
<dbReference type="NCBIfam" id="NF002462">
    <property type="entry name" value="PRK01678.1"/>
    <property type="match status" value="1"/>
</dbReference>
<dbReference type="PANTHER" id="PTHR33280">
    <property type="entry name" value="50S RIBOSOMAL PROTEIN L31, CHLOROPLASTIC"/>
    <property type="match status" value="1"/>
</dbReference>
<dbReference type="PANTHER" id="PTHR33280:SF1">
    <property type="entry name" value="LARGE RIBOSOMAL SUBUNIT PROTEIN BL31C"/>
    <property type="match status" value="1"/>
</dbReference>
<dbReference type="Pfam" id="PF01197">
    <property type="entry name" value="Ribosomal_L31"/>
    <property type="match status" value="1"/>
</dbReference>
<dbReference type="PRINTS" id="PR01249">
    <property type="entry name" value="RIBOSOMALL31"/>
</dbReference>
<dbReference type="SUPFAM" id="SSF143800">
    <property type="entry name" value="L28p-like"/>
    <property type="match status" value="1"/>
</dbReference>
<dbReference type="PROSITE" id="PS01143">
    <property type="entry name" value="RIBOSOMAL_L31"/>
    <property type="match status" value="1"/>
</dbReference>
<evidence type="ECO:0000255" key="1">
    <source>
        <dbReference type="HAMAP-Rule" id="MF_00502"/>
    </source>
</evidence>
<evidence type="ECO:0000305" key="2"/>
<name>RL31B_HERAR</name>
<proteinExistence type="inferred from homology"/>
<keyword id="KW-1185">Reference proteome</keyword>
<keyword id="KW-0687">Ribonucleoprotein</keyword>
<keyword id="KW-0689">Ribosomal protein</keyword>
<reference key="1">
    <citation type="journal article" date="2007" name="PLoS Genet.">
        <title>A tale of two oxidation states: bacterial colonization of arsenic-rich environments.</title>
        <authorList>
            <person name="Muller D."/>
            <person name="Medigue C."/>
            <person name="Koechler S."/>
            <person name="Barbe V."/>
            <person name="Barakat M."/>
            <person name="Talla E."/>
            <person name="Bonnefoy V."/>
            <person name="Krin E."/>
            <person name="Arsene-Ploetze F."/>
            <person name="Carapito C."/>
            <person name="Chandler M."/>
            <person name="Cournoyer B."/>
            <person name="Cruveiller S."/>
            <person name="Dossat C."/>
            <person name="Duval S."/>
            <person name="Heymann M."/>
            <person name="Leize E."/>
            <person name="Lieutaud A."/>
            <person name="Lievremont D."/>
            <person name="Makita Y."/>
            <person name="Mangenot S."/>
            <person name="Nitschke W."/>
            <person name="Ortet P."/>
            <person name="Perdrial N."/>
            <person name="Schoepp B."/>
            <person name="Siguier P."/>
            <person name="Simeonova D.D."/>
            <person name="Rouy Z."/>
            <person name="Segurens B."/>
            <person name="Turlin E."/>
            <person name="Vallenet D."/>
            <person name="van Dorsselaer A."/>
            <person name="Weiss S."/>
            <person name="Weissenbach J."/>
            <person name="Lett M.-C."/>
            <person name="Danchin A."/>
            <person name="Bertin P.N."/>
        </authorList>
    </citation>
    <scope>NUCLEOTIDE SEQUENCE [LARGE SCALE GENOMIC DNA]</scope>
    <source>
        <strain>ULPAs1</strain>
    </source>
</reference>
<feature type="chain" id="PRO_1000014697" description="Large ribosomal subunit protein bL31B">
    <location>
        <begin position="1"/>
        <end position="88"/>
    </location>
</feature>